<organism>
    <name type="scientific">Lachnoclostridium phytofermentans (strain ATCC 700394 / DSM 18823 / ISDg)</name>
    <name type="common">Clostridium phytofermentans</name>
    <dbReference type="NCBI Taxonomy" id="357809"/>
    <lineage>
        <taxon>Bacteria</taxon>
        <taxon>Bacillati</taxon>
        <taxon>Bacillota</taxon>
        <taxon>Clostridia</taxon>
        <taxon>Lachnospirales</taxon>
        <taxon>Lachnospiraceae</taxon>
    </lineage>
</organism>
<keyword id="KW-0030">Aminoacyl-tRNA synthetase</keyword>
<keyword id="KW-0067">ATP-binding</keyword>
<keyword id="KW-0963">Cytoplasm</keyword>
<keyword id="KW-0436">Ligase</keyword>
<keyword id="KW-0479">Metal-binding</keyword>
<keyword id="KW-0547">Nucleotide-binding</keyword>
<keyword id="KW-0648">Protein biosynthesis</keyword>
<keyword id="KW-1185">Reference proteome</keyword>
<keyword id="KW-0862">Zinc</keyword>
<name>SYE_LACP7</name>
<comment type="function">
    <text evidence="1">Catalyzes the attachment of glutamate to tRNA(Glu) in a two-step reaction: glutamate is first activated by ATP to form Glu-AMP and then transferred to the acceptor end of tRNA(Glu).</text>
</comment>
<comment type="catalytic activity">
    <reaction evidence="1">
        <text>tRNA(Glu) + L-glutamate + ATP = L-glutamyl-tRNA(Glu) + AMP + diphosphate</text>
        <dbReference type="Rhea" id="RHEA:23540"/>
        <dbReference type="Rhea" id="RHEA-COMP:9663"/>
        <dbReference type="Rhea" id="RHEA-COMP:9680"/>
        <dbReference type="ChEBI" id="CHEBI:29985"/>
        <dbReference type="ChEBI" id="CHEBI:30616"/>
        <dbReference type="ChEBI" id="CHEBI:33019"/>
        <dbReference type="ChEBI" id="CHEBI:78442"/>
        <dbReference type="ChEBI" id="CHEBI:78520"/>
        <dbReference type="ChEBI" id="CHEBI:456215"/>
        <dbReference type="EC" id="6.1.1.17"/>
    </reaction>
</comment>
<comment type="cofactor">
    <cofactor evidence="1">
        <name>Zn(2+)</name>
        <dbReference type="ChEBI" id="CHEBI:29105"/>
    </cofactor>
    <text evidence="1">Binds 1 zinc ion per subunit.</text>
</comment>
<comment type="subunit">
    <text evidence="1">Monomer.</text>
</comment>
<comment type="subcellular location">
    <subcellularLocation>
        <location evidence="1">Cytoplasm</location>
    </subcellularLocation>
</comment>
<comment type="similarity">
    <text evidence="1">Belongs to the class-I aminoacyl-tRNA synthetase family. Glutamate--tRNA ligase type 1 subfamily.</text>
</comment>
<feature type="chain" id="PRO_0000330965" description="Glutamate--tRNA ligase">
    <location>
        <begin position="1"/>
        <end position="490"/>
    </location>
</feature>
<feature type="short sequence motif" description="'HIGH' region" evidence="1">
    <location>
        <begin position="10"/>
        <end position="20"/>
    </location>
</feature>
<feature type="short sequence motif" description="'KMSKS' region" evidence="1">
    <location>
        <begin position="257"/>
        <end position="261"/>
    </location>
</feature>
<feature type="binding site" evidence="1">
    <location>
        <position position="109"/>
    </location>
    <ligand>
        <name>Zn(2+)</name>
        <dbReference type="ChEBI" id="CHEBI:29105"/>
    </ligand>
</feature>
<feature type="binding site" evidence="1">
    <location>
        <position position="111"/>
    </location>
    <ligand>
        <name>Zn(2+)</name>
        <dbReference type="ChEBI" id="CHEBI:29105"/>
    </ligand>
</feature>
<feature type="binding site" evidence="1">
    <location>
        <position position="140"/>
    </location>
    <ligand>
        <name>Zn(2+)</name>
        <dbReference type="ChEBI" id="CHEBI:29105"/>
    </ligand>
</feature>
<feature type="binding site" evidence="1">
    <location>
        <position position="142"/>
    </location>
    <ligand>
        <name>Zn(2+)</name>
        <dbReference type="ChEBI" id="CHEBI:29105"/>
    </ligand>
</feature>
<feature type="binding site" evidence="1">
    <location>
        <position position="260"/>
    </location>
    <ligand>
        <name>ATP</name>
        <dbReference type="ChEBI" id="CHEBI:30616"/>
    </ligand>
</feature>
<protein>
    <recommendedName>
        <fullName evidence="1">Glutamate--tRNA ligase</fullName>
        <ecNumber evidence="1">6.1.1.17</ecNumber>
    </recommendedName>
    <alternativeName>
        <fullName evidence="1">Glutamyl-tRNA synthetase</fullName>
        <shortName evidence="1">GluRS</shortName>
    </alternativeName>
</protein>
<proteinExistence type="inferred from homology"/>
<evidence type="ECO:0000255" key="1">
    <source>
        <dbReference type="HAMAP-Rule" id="MF_00022"/>
    </source>
</evidence>
<sequence length="490" mass="56076">MAKVRTRFAPSPTGRMHVGNLRTALYEYLIAKHEGGDFILRIEDTDQERLVEGATEIIYRTIAKTGLIHDEGPDKDKGFGPYVQSERQATGIYLKYAKELVENGEAYYCFCTKERLETLKSAVGEEDGESKEITKYDKHCLHLSKEEVEANLAAGMPYVIRQNMPTEGTTSFTDAIYGTITVENSELDDMILIKSDGFPTYNFANVIDDHFMEITHVVRGNEYLSSTPKYTRLYKAFGWEEPVYIHCPLITNEEHQKLSKRSGHSSFEDLIEQGFVTEAIVNFIALLGWSSTTNEEIFSLEELVREFDYTHINKSPSVFDMNKLRWMNGEYIKRMDSEKYYEYALPQIKKVVTKDYDLKFIADLVKTRIETFLDIAEMIDFFDELPEYDIAMYTHKKMKTDSENSLKVLQDVLPRFEELTCYSVSSIESVLMGYIAENGIKNGQGLWPVRTAVSGKQSTPGGAYEIMSILGKEESLRRIRIAIDKLSSSL</sequence>
<reference key="1">
    <citation type="submission" date="2007-11" db="EMBL/GenBank/DDBJ databases">
        <title>Complete genome sequence of Clostridium phytofermentans ISDg.</title>
        <authorList>
            <person name="Leschine S.B."/>
            <person name="Warnick T.A."/>
            <person name="Blanchard J.L."/>
            <person name="Schnell D.J."/>
            <person name="Petit E.L."/>
            <person name="LaTouf W.G."/>
            <person name="Copeland A."/>
            <person name="Lucas S."/>
            <person name="Lapidus A."/>
            <person name="Barry K."/>
            <person name="Glavina del Rio T."/>
            <person name="Dalin E."/>
            <person name="Tice H."/>
            <person name="Pitluck S."/>
            <person name="Kiss H."/>
            <person name="Brettin T."/>
            <person name="Bruce D."/>
            <person name="Detter J.C."/>
            <person name="Han C."/>
            <person name="Kuske C."/>
            <person name="Schmutz J."/>
            <person name="Larimer F."/>
            <person name="Land M."/>
            <person name="Hauser L."/>
            <person name="Kyrpides N."/>
            <person name="Kim E.A."/>
            <person name="Richardson P."/>
        </authorList>
    </citation>
    <scope>NUCLEOTIDE SEQUENCE [LARGE SCALE GENOMIC DNA]</scope>
    <source>
        <strain>ATCC 700394 / DSM 18823 / ISDg</strain>
    </source>
</reference>
<accession>A9KRX7</accession>
<dbReference type="EC" id="6.1.1.17" evidence="1"/>
<dbReference type="EMBL" id="CP000885">
    <property type="protein sequence ID" value="ABX40608.1"/>
    <property type="molecule type" value="Genomic_DNA"/>
</dbReference>
<dbReference type="RefSeq" id="WP_012198251.1">
    <property type="nucleotide sequence ID" value="NC_010001.1"/>
</dbReference>
<dbReference type="SMR" id="A9KRX7"/>
<dbReference type="STRING" id="357809.Cphy_0221"/>
<dbReference type="KEGG" id="cpy:Cphy_0221"/>
<dbReference type="eggNOG" id="COG0008">
    <property type="taxonomic scope" value="Bacteria"/>
</dbReference>
<dbReference type="HOGENOM" id="CLU_015768_6_3_9"/>
<dbReference type="OrthoDB" id="9807503at2"/>
<dbReference type="Proteomes" id="UP000000370">
    <property type="component" value="Chromosome"/>
</dbReference>
<dbReference type="GO" id="GO:0005829">
    <property type="term" value="C:cytosol"/>
    <property type="evidence" value="ECO:0007669"/>
    <property type="project" value="TreeGrafter"/>
</dbReference>
<dbReference type="GO" id="GO:0005524">
    <property type="term" value="F:ATP binding"/>
    <property type="evidence" value="ECO:0007669"/>
    <property type="project" value="UniProtKB-UniRule"/>
</dbReference>
<dbReference type="GO" id="GO:0004818">
    <property type="term" value="F:glutamate-tRNA ligase activity"/>
    <property type="evidence" value="ECO:0007669"/>
    <property type="project" value="UniProtKB-UniRule"/>
</dbReference>
<dbReference type="GO" id="GO:0000049">
    <property type="term" value="F:tRNA binding"/>
    <property type="evidence" value="ECO:0007669"/>
    <property type="project" value="InterPro"/>
</dbReference>
<dbReference type="GO" id="GO:0008270">
    <property type="term" value="F:zinc ion binding"/>
    <property type="evidence" value="ECO:0007669"/>
    <property type="project" value="UniProtKB-UniRule"/>
</dbReference>
<dbReference type="GO" id="GO:0006424">
    <property type="term" value="P:glutamyl-tRNA aminoacylation"/>
    <property type="evidence" value="ECO:0007669"/>
    <property type="project" value="UniProtKB-UniRule"/>
</dbReference>
<dbReference type="CDD" id="cd00808">
    <property type="entry name" value="GluRS_core"/>
    <property type="match status" value="1"/>
</dbReference>
<dbReference type="FunFam" id="3.40.50.620:FF:000045">
    <property type="entry name" value="Glutamate--tRNA ligase, mitochondrial"/>
    <property type="match status" value="1"/>
</dbReference>
<dbReference type="Gene3D" id="1.10.10.350">
    <property type="match status" value="1"/>
</dbReference>
<dbReference type="Gene3D" id="3.40.50.620">
    <property type="entry name" value="HUPs"/>
    <property type="match status" value="1"/>
</dbReference>
<dbReference type="HAMAP" id="MF_00022">
    <property type="entry name" value="Glu_tRNA_synth_type1"/>
    <property type="match status" value="1"/>
</dbReference>
<dbReference type="InterPro" id="IPR045462">
    <property type="entry name" value="aa-tRNA-synth_I_cd-bd"/>
</dbReference>
<dbReference type="InterPro" id="IPR020751">
    <property type="entry name" value="aa-tRNA-synth_I_codon-bd_sub2"/>
</dbReference>
<dbReference type="InterPro" id="IPR001412">
    <property type="entry name" value="aa-tRNA-synth_I_CS"/>
</dbReference>
<dbReference type="InterPro" id="IPR008925">
    <property type="entry name" value="aa_tRNA-synth_I_cd-bd_sf"/>
</dbReference>
<dbReference type="InterPro" id="IPR004527">
    <property type="entry name" value="Glu-tRNA-ligase_bac/mito"/>
</dbReference>
<dbReference type="InterPro" id="IPR000924">
    <property type="entry name" value="Glu/Gln-tRNA-synth"/>
</dbReference>
<dbReference type="InterPro" id="IPR020058">
    <property type="entry name" value="Glu/Gln-tRNA-synth_Ib_cat-dom"/>
</dbReference>
<dbReference type="InterPro" id="IPR049940">
    <property type="entry name" value="GluQ/Sye"/>
</dbReference>
<dbReference type="InterPro" id="IPR033910">
    <property type="entry name" value="GluRS_core"/>
</dbReference>
<dbReference type="InterPro" id="IPR014729">
    <property type="entry name" value="Rossmann-like_a/b/a_fold"/>
</dbReference>
<dbReference type="NCBIfam" id="TIGR00464">
    <property type="entry name" value="gltX_bact"/>
    <property type="match status" value="1"/>
</dbReference>
<dbReference type="PANTHER" id="PTHR43311">
    <property type="entry name" value="GLUTAMATE--TRNA LIGASE"/>
    <property type="match status" value="1"/>
</dbReference>
<dbReference type="PANTHER" id="PTHR43311:SF2">
    <property type="entry name" value="GLUTAMATE--TRNA LIGASE, MITOCHONDRIAL-RELATED"/>
    <property type="match status" value="1"/>
</dbReference>
<dbReference type="Pfam" id="PF19269">
    <property type="entry name" value="Anticodon_2"/>
    <property type="match status" value="1"/>
</dbReference>
<dbReference type="Pfam" id="PF00749">
    <property type="entry name" value="tRNA-synt_1c"/>
    <property type="match status" value="1"/>
</dbReference>
<dbReference type="PRINTS" id="PR00987">
    <property type="entry name" value="TRNASYNTHGLU"/>
</dbReference>
<dbReference type="SUPFAM" id="SSF48163">
    <property type="entry name" value="An anticodon-binding domain of class I aminoacyl-tRNA synthetases"/>
    <property type="match status" value="1"/>
</dbReference>
<dbReference type="SUPFAM" id="SSF52374">
    <property type="entry name" value="Nucleotidylyl transferase"/>
    <property type="match status" value="1"/>
</dbReference>
<dbReference type="PROSITE" id="PS00178">
    <property type="entry name" value="AA_TRNA_LIGASE_I"/>
    <property type="match status" value="1"/>
</dbReference>
<gene>
    <name evidence="1" type="primary">gltX</name>
    <name type="ordered locus">Cphy_0221</name>
</gene>